<dbReference type="EMBL" id="BA000028">
    <property type="protein sequence ID" value="BAC12049.1"/>
    <property type="molecule type" value="Genomic_DNA"/>
</dbReference>
<dbReference type="RefSeq" id="WP_011064496.1">
    <property type="nucleotide sequence ID" value="NC_004193.1"/>
</dbReference>
<dbReference type="SMR" id="Q8EU05"/>
<dbReference type="STRING" id="221109.gene:10732283"/>
<dbReference type="KEGG" id="oih:OB0093"/>
<dbReference type="eggNOG" id="COG0542">
    <property type="taxonomic scope" value="Bacteria"/>
</dbReference>
<dbReference type="HOGENOM" id="CLU_005070_4_1_9"/>
<dbReference type="OrthoDB" id="9803641at2"/>
<dbReference type="PhylomeDB" id="Q8EU05"/>
<dbReference type="Proteomes" id="UP000000822">
    <property type="component" value="Chromosome"/>
</dbReference>
<dbReference type="GO" id="GO:0005737">
    <property type="term" value="C:cytoplasm"/>
    <property type="evidence" value="ECO:0007669"/>
    <property type="project" value="UniProtKB-SubCell"/>
</dbReference>
<dbReference type="GO" id="GO:0005524">
    <property type="term" value="F:ATP binding"/>
    <property type="evidence" value="ECO:0007669"/>
    <property type="project" value="UniProtKB-KW"/>
</dbReference>
<dbReference type="GO" id="GO:0016887">
    <property type="term" value="F:ATP hydrolysis activity"/>
    <property type="evidence" value="ECO:0007669"/>
    <property type="project" value="InterPro"/>
</dbReference>
<dbReference type="GO" id="GO:0034605">
    <property type="term" value="P:cellular response to heat"/>
    <property type="evidence" value="ECO:0007669"/>
    <property type="project" value="TreeGrafter"/>
</dbReference>
<dbReference type="CDD" id="cd00009">
    <property type="entry name" value="AAA"/>
    <property type="match status" value="1"/>
</dbReference>
<dbReference type="CDD" id="cd19499">
    <property type="entry name" value="RecA-like_ClpB_Hsp104-like"/>
    <property type="match status" value="1"/>
</dbReference>
<dbReference type="FunFam" id="1.10.8.60:FF:000017">
    <property type="entry name" value="ATP-dependent chaperone ClpB"/>
    <property type="match status" value="1"/>
</dbReference>
<dbReference type="FunFam" id="1.10.1780.10:FF:000001">
    <property type="entry name" value="ATP-dependent Clp protease ATP-binding subunit"/>
    <property type="match status" value="1"/>
</dbReference>
<dbReference type="FunFam" id="1.10.8.60:FF:000011">
    <property type="entry name" value="ATP-dependent Clp protease ATP-binding subunit"/>
    <property type="match status" value="1"/>
</dbReference>
<dbReference type="FunFam" id="3.40.50.300:FF:000025">
    <property type="entry name" value="ATP-dependent Clp protease subunit"/>
    <property type="match status" value="1"/>
</dbReference>
<dbReference type="FunFam" id="3.40.50.300:FF:000010">
    <property type="entry name" value="Chaperone clpB 1, putative"/>
    <property type="match status" value="1"/>
</dbReference>
<dbReference type="Gene3D" id="1.10.8.60">
    <property type="match status" value="2"/>
</dbReference>
<dbReference type="Gene3D" id="1.10.1780.10">
    <property type="entry name" value="Clp, N-terminal domain"/>
    <property type="match status" value="1"/>
</dbReference>
<dbReference type="Gene3D" id="3.40.50.300">
    <property type="entry name" value="P-loop containing nucleotide triphosphate hydrolases"/>
    <property type="match status" value="2"/>
</dbReference>
<dbReference type="Gene3D" id="4.10.860.10">
    <property type="entry name" value="UVR domain"/>
    <property type="match status" value="1"/>
</dbReference>
<dbReference type="InterPro" id="IPR003593">
    <property type="entry name" value="AAA+_ATPase"/>
</dbReference>
<dbReference type="InterPro" id="IPR003959">
    <property type="entry name" value="ATPase_AAA_core"/>
</dbReference>
<dbReference type="InterPro" id="IPR019489">
    <property type="entry name" value="Clp_ATPase_C"/>
</dbReference>
<dbReference type="InterPro" id="IPR036628">
    <property type="entry name" value="Clp_N_dom_sf"/>
</dbReference>
<dbReference type="InterPro" id="IPR004176">
    <property type="entry name" value="Clp_R_dom"/>
</dbReference>
<dbReference type="InterPro" id="IPR001270">
    <property type="entry name" value="ClpA/B"/>
</dbReference>
<dbReference type="InterPro" id="IPR018368">
    <property type="entry name" value="ClpA/B_CS1"/>
</dbReference>
<dbReference type="InterPro" id="IPR028299">
    <property type="entry name" value="ClpA/B_CS2"/>
</dbReference>
<dbReference type="InterPro" id="IPR041546">
    <property type="entry name" value="ClpA/ClpB_AAA_lid"/>
</dbReference>
<dbReference type="InterPro" id="IPR050130">
    <property type="entry name" value="ClpA_ClpB"/>
</dbReference>
<dbReference type="InterPro" id="IPR027417">
    <property type="entry name" value="P-loop_NTPase"/>
</dbReference>
<dbReference type="InterPro" id="IPR001943">
    <property type="entry name" value="UVR_dom"/>
</dbReference>
<dbReference type="PANTHER" id="PTHR11638">
    <property type="entry name" value="ATP-DEPENDENT CLP PROTEASE"/>
    <property type="match status" value="1"/>
</dbReference>
<dbReference type="PANTHER" id="PTHR11638:SF18">
    <property type="entry name" value="HEAT SHOCK PROTEIN 104"/>
    <property type="match status" value="1"/>
</dbReference>
<dbReference type="Pfam" id="PF00004">
    <property type="entry name" value="AAA"/>
    <property type="match status" value="1"/>
</dbReference>
<dbReference type="Pfam" id="PF07724">
    <property type="entry name" value="AAA_2"/>
    <property type="match status" value="1"/>
</dbReference>
<dbReference type="Pfam" id="PF17871">
    <property type="entry name" value="AAA_lid_9"/>
    <property type="match status" value="1"/>
</dbReference>
<dbReference type="Pfam" id="PF02861">
    <property type="entry name" value="Clp_N"/>
    <property type="match status" value="2"/>
</dbReference>
<dbReference type="Pfam" id="PF10431">
    <property type="entry name" value="ClpB_D2-small"/>
    <property type="match status" value="1"/>
</dbReference>
<dbReference type="PRINTS" id="PR00300">
    <property type="entry name" value="CLPPROTEASEA"/>
</dbReference>
<dbReference type="SMART" id="SM00382">
    <property type="entry name" value="AAA"/>
    <property type="match status" value="2"/>
</dbReference>
<dbReference type="SMART" id="SM01086">
    <property type="entry name" value="ClpB_D2-small"/>
    <property type="match status" value="1"/>
</dbReference>
<dbReference type="SUPFAM" id="SSF81923">
    <property type="entry name" value="Double Clp-N motif"/>
    <property type="match status" value="1"/>
</dbReference>
<dbReference type="SUPFAM" id="SSF52540">
    <property type="entry name" value="P-loop containing nucleoside triphosphate hydrolases"/>
    <property type="match status" value="2"/>
</dbReference>
<dbReference type="PROSITE" id="PS51903">
    <property type="entry name" value="CLP_R"/>
    <property type="match status" value="1"/>
</dbReference>
<dbReference type="PROSITE" id="PS00870">
    <property type="entry name" value="CLPAB_1"/>
    <property type="match status" value="1"/>
</dbReference>
<dbReference type="PROSITE" id="PS00871">
    <property type="entry name" value="CLPAB_2"/>
    <property type="match status" value="1"/>
</dbReference>
<dbReference type="PROSITE" id="PS50151">
    <property type="entry name" value="UVR"/>
    <property type="match status" value="1"/>
</dbReference>
<gene>
    <name type="primary">clpB</name>
    <name type="ordered locus">OB0093</name>
</gene>
<name>CLPB_OCEIH</name>
<protein>
    <recommendedName>
        <fullName>Chaperone protein ClpB</fullName>
    </recommendedName>
</protein>
<comment type="function">
    <text evidence="1">Part of a stress-induced multi-chaperone system, it is involved in the recovery of the cell from heat-induced damage, in cooperation with DnaK, DnaJ and GrpE. Acts before DnaK, in the processing of protein aggregates. Protein binding stimulates the ATPase activity; ATP hydrolysis unfolds the denatured protein aggregates, which probably helps expose new hydrophobic binding sites on the surface of ClpB-bound aggregates, contributing to the solubilization and refolding of denatured protein aggregates by DnaK (By similarity).</text>
</comment>
<comment type="subunit">
    <text evidence="1">Homohexamer. The oligomerization is ATP-dependent (By similarity).</text>
</comment>
<comment type="subcellular location">
    <subcellularLocation>
        <location evidence="5">Cytoplasm</location>
    </subcellularLocation>
</comment>
<comment type="domain">
    <text evidence="1">The Clp repeat (R) domain probably functions as a substrate-discriminating domain, recruiting aggregated proteins to the ClpB hexamer and/or stabilizing bound proteins. The NBD2 domain is responsible for oligomerization, whereas the NBD1 domain stabilizes the hexamer probably in an ATP-dependent manner. The movement of the coiled-coil domain is essential for ClpB ability to rescue proteins from an aggregated state, probably by pulling apart large aggregated proteins, which are bound between the coiled-coils motifs of adjacent ClpB subunits in the functional hexamer (By similarity).</text>
</comment>
<comment type="similarity">
    <text evidence="5">Belongs to the ClpA/ClpB family.</text>
</comment>
<keyword id="KW-0067">ATP-binding</keyword>
<keyword id="KW-0143">Chaperone</keyword>
<keyword id="KW-0175">Coiled coil</keyword>
<keyword id="KW-0963">Cytoplasm</keyword>
<keyword id="KW-0547">Nucleotide-binding</keyword>
<keyword id="KW-1185">Reference proteome</keyword>
<keyword id="KW-0677">Repeat</keyword>
<keyword id="KW-0346">Stress response</keyword>
<reference key="1">
    <citation type="journal article" date="2002" name="Nucleic Acids Res.">
        <title>Genome sequence of Oceanobacillus iheyensis isolated from the Iheya Ridge and its unexpected adaptive capabilities to extreme environments.</title>
        <authorList>
            <person name="Takami H."/>
            <person name="Takaki Y."/>
            <person name="Uchiyama I."/>
        </authorList>
    </citation>
    <scope>NUCLEOTIDE SEQUENCE [LARGE SCALE GENOMIC DNA]</scope>
    <source>
        <strain>DSM 14371 / CIP 107618 / JCM 11309 / KCTC 3954 / HTE831</strain>
    </source>
</reference>
<accession>Q8EU05</accession>
<organism>
    <name type="scientific">Oceanobacillus iheyensis (strain DSM 14371 / CIP 107618 / JCM 11309 / KCTC 3954 / HTE831)</name>
    <dbReference type="NCBI Taxonomy" id="221109"/>
    <lineage>
        <taxon>Bacteria</taxon>
        <taxon>Bacillati</taxon>
        <taxon>Bacillota</taxon>
        <taxon>Bacilli</taxon>
        <taxon>Bacillales</taxon>
        <taxon>Bacillaceae</taxon>
        <taxon>Oceanobacillus</taxon>
    </lineage>
</organism>
<sequence>MMFGRFTERAQKVLALSQEEAVRLGHNNIGTEHILLGLVREGEGIAAKALQSLGLEVSKIQEEVEKLIGVGKQPTQSIHYTPRAKKVVELSQDEARKLGHSYVGTEHILLGLIREGEGVAARVLNNLGVSLNKARQQVLQLLGSNESQAGRQGRSGQQSNASTPTLDSLARDLTVSAKEGKIDPVIGRSKEIERVIQVLSRRTKNNPVLIGEPGVGKTAVAEGLAQQIIDNEVPETLRDKRVMTLDMGTVVAGTKYRGEFEDRLKKVMEEIRQAGNIILFIDELHTLIGAGGAEGAIDASNILKPSLARGELQCIGATTLDEYRKYIEKDAALERRFQPIQVDEPTLEETIQILNGLRDRYEAHHRVTITDEAIEAAASLSDRYITDRFLPDKAIDLIDEAGSKVRLRSYTVPPNLKELEQKLDEVRKEKDAAVQSQEFEKAASLRDSEQRFREELETTKNQWKEKQGQTDSEVTMEDIAAVVSTWTGVPVSKLTKDETDRLLNMEKILHDRVIGQSEAVNAVAKAIRRARAGLKDPKRPIGSFIFLGPTGVGKTELARALAEVMFADEDAMIRIDMSEYMERHATSRLVGSPPGYVGYDEGGQLTEKVRRKPYSVVLLDEVEKAHPEVFNILLQVLEDGRLTDSKGRVVDFRNTVIIMTSNVGASELKRNKYVGFALDNEEKDYKDMKSKVIEELKKAFRPEFLNRIDETIVFHSLEKEHMKDIVTLMVQQLQKRLKEQDLHLSLTDKAIEKIANEGFDPEYGARPLRRSIQKNIEDLLSEELLRGAIEKEQQVKIGLNNKGEFIVLP</sequence>
<evidence type="ECO:0000250" key="1"/>
<evidence type="ECO:0000255" key="2">
    <source>
        <dbReference type="PROSITE-ProRule" id="PRU00217"/>
    </source>
</evidence>
<evidence type="ECO:0000255" key="3">
    <source>
        <dbReference type="PROSITE-ProRule" id="PRU01251"/>
    </source>
</evidence>
<evidence type="ECO:0000256" key="4">
    <source>
        <dbReference type="SAM" id="MobiDB-lite"/>
    </source>
</evidence>
<evidence type="ECO:0000305" key="5"/>
<proteinExistence type="inferred from homology"/>
<feature type="chain" id="PRO_0000191150" description="Chaperone protein ClpB">
    <location>
        <begin position="1"/>
        <end position="809"/>
    </location>
</feature>
<feature type="domain" description="Clp R" evidence="3">
    <location>
        <begin position="3"/>
        <end position="144"/>
    </location>
</feature>
<feature type="domain" description="UVR" evidence="2">
    <location>
        <begin position="420"/>
        <end position="455"/>
    </location>
</feature>
<feature type="region of interest" description="Repeat 1" evidence="3">
    <location>
        <begin position="6"/>
        <end position="71"/>
    </location>
</feature>
<feature type="region of interest" description="Repeat 2" evidence="3">
    <location>
        <begin position="80"/>
        <end position="144"/>
    </location>
</feature>
<feature type="region of interest" description="Disordered" evidence="4">
    <location>
        <begin position="145"/>
        <end position="165"/>
    </location>
</feature>
<feature type="region of interest" description="NBD1" evidence="1">
    <location>
        <begin position="163"/>
        <end position="344"/>
    </location>
</feature>
<feature type="region of interest" description="Linker" evidence="1">
    <location>
        <begin position="345"/>
        <end position="488"/>
    </location>
</feature>
<feature type="region of interest" description="NBD2" evidence="1">
    <location>
        <begin position="498"/>
        <end position="716"/>
    </location>
</feature>
<feature type="region of interest" description="C-terminal" evidence="1">
    <location>
        <begin position="717"/>
        <end position="809"/>
    </location>
</feature>
<feature type="coiled-coil region" evidence="1">
    <location>
        <begin position="395"/>
        <end position="471"/>
    </location>
</feature>
<feature type="compositionally biased region" description="Low complexity" evidence="4">
    <location>
        <begin position="147"/>
        <end position="162"/>
    </location>
</feature>
<feature type="binding site" evidence="1">
    <location>
        <begin position="211"/>
        <end position="218"/>
    </location>
    <ligand>
        <name>ATP</name>
        <dbReference type="ChEBI" id="CHEBI:30616"/>
        <label>1</label>
    </ligand>
</feature>
<feature type="binding site" evidence="1">
    <location>
        <begin position="548"/>
        <end position="555"/>
    </location>
    <ligand>
        <name>ATP</name>
        <dbReference type="ChEBI" id="CHEBI:30616"/>
        <label>2</label>
    </ligand>
</feature>